<reference evidence="8 9" key="1">
    <citation type="journal article" date="2011" name="Plant Cell Environ.">
        <title>Identification of a homolog of Arabidopsis DSP4 (SEX4) in chestnut: its induction and accumulation in stem amyloplasts during winter or in response to the cold.</title>
        <authorList>
            <person name="Berrocal-Lobo M."/>
            <person name="Ibanez C."/>
            <person name="Acebo P."/>
            <person name="Ramos A."/>
            <person name="Perez-Solis E."/>
            <person name="Collada C."/>
            <person name="Casado R."/>
            <person name="Aragoncillo C."/>
            <person name="Allona I."/>
        </authorList>
    </citation>
    <scope>NUCLEOTIDE SEQUENCE [MRNA]</scope>
    <scope>SUBCELLULAR LOCATION</scope>
    <scope>TISSUE SPECIFICITY</scope>
    <scope>DEVELOPMENTAL STAGE</scope>
    <scope>INDUCTION</scope>
    <source>
        <tissue evidence="6">Stem</tissue>
    </source>
</reference>
<protein>
    <recommendedName>
        <fullName evidence="2">Phosphoglucan phosphatase DSP4, amyloplastic</fullName>
        <ecNumber evidence="2">3.1.3.-</ecNumber>
    </recommendedName>
    <alternativeName>
        <fullName evidence="7">Dual specificity protein phosphatase 4</fullName>
        <shortName evidence="7">CsDSP4</shortName>
    </alternativeName>
</protein>
<sequence>MFCVQNLPRSSALPLQSFKSHQRRPPCSVNTLGVMSNVNLHRSMAVKAISGPTSSAETSDANVEEEKSETYSTNMTEAMGAVLTYRHELGINYNFIRPDLIVGSCLQTPEDVDKLRSIGVKTIFCLQQNSDLEYFGVDINGIREYAKTYDDIQHLRAEIRDFDAFDLRVRLPAVVSKLYKAINRNGGVTYVHCTAGLGRAPAVTLAYMFWVQGYKLIEAHNLLQSKRSCFPKLDAIKSAAADILTGLRKKVVTLTWKNPDCTTLEISGLDIGWGQRIPLQFDEEQGLWILRRELAEGCYEYKYIVDGEWTINENELVTSANKDGHVNNFVQVFDDNPDSFNANLRKRLTGDDPDLSMDERLKIRQFLESIPDEEQ</sequence>
<keyword id="KW-0035">Amyloplast</keyword>
<keyword id="KW-0119">Carbohydrate metabolism</keyword>
<keyword id="KW-0378">Hydrolase</keyword>
<keyword id="KW-0539">Nucleus</keyword>
<keyword id="KW-0934">Plastid</keyword>
<keyword id="KW-0904">Protein phosphatase</keyword>
<keyword id="KW-0809">Transit peptide</keyword>
<accession>G4LTX4</accession>
<organism>
    <name type="scientific">Castanea sativa</name>
    <name type="common">Sweet chestnut</name>
    <dbReference type="NCBI Taxonomy" id="21020"/>
    <lineage>
        <taxon>Eukaryota</taxon>
        <taxon>Viridiplantae</taxon>
        <taxon>Streptophyta</taxon>
        <taxon>Embryophyta</taxon>
        <taxon>Tracheophyta</taxon>
        <taxon>Spermatophyta</taxon>
        <taxon>Magnoliopsida</taxon>
        <taxon>eudicotyledons</taxon>
        <taxon>Gunneridae</taxon>
        <taxon>Pentapetalae</taxon>
        <taxon>rosids</taxon>
        <taxon>fabids</taxon>
        <taxon>Fagales</taxon>
        <taxon>Fagaceae</taxon>
        <taxon>Castanea</taxon>
    </lineage>
</organism>
<name>DSPG4_CASSA</name>
<comment type="function">
    <text evidence="2">Starch granule-associated phosphoglucan phosphatase involved in the control of starch accumulation. Acts as a major regulator of the initial steps of starch degradation at the granule surface. Functions during the day by dephosphorylating the night-accumulated phospho-oligosaccharides. Can release phosphate from both the C6 and the C3 positions (By similarity).</text>
</comment>
<comment type="subcellular location">
    <subcellularLocation>
        <location evidence="6">Plastid</location>
        <location evidence="6">Amyloplast</location>
    </subcellularLocation>
    <subcellularLocation>
        <location evidence="6">Nucleus</location>
    </subcellularLocation>
    <text evidence="6">In dormant or cold-stressed trees, localizes to both the amyloplast stroma and nucleus. In conditions of vegetative growth, detected in the nucleus only.</text>
</comment>
<comment type="tissue specificity">
    <text evidence="6">Expressed in phloem parenchyma of 16-24 week old seedlings and 2 year old trees (at protein level). Expressed in leaves of 16-24 week old seedlings and 2 year old trees.</text>
</comment>
<comment type="developmental stage">
    <text evidence="6">Shows seasonal variation in expression levels with maximal levels from November-March (at protein level). Shows diurnal fluctuations in expression level, with peak levels at dusk, under conditions of natural light but not under conditions of continuous light: may not have true circadian rhythmicity.</text>
</comment>
<comment type="induction">
    <text evidence="6">By cold stress for at least 9 days at 4 degrees Celsius.</text>
</comment>
<comment type="domain">
    <text evidence="2">Contains a C-terminal polysaccharide-binding domain which interacts with the phosphatase domain; this interaction is required for glucan phosphatase activity.</text>
</comment>
<gene>
    <name evidence="9" type="primary">DSP4</name>
    <name evidence="7" type="synonym">SEX4</name>
</gene>
<evidence type="ECO:0000250" key="1"/>
<evidence type="ECO:0000250" key="2">
    <source>
        <dbReference type="UniProtKB" id="Q9FEB5"/>
    </source>
</evidence>
<evidence type="ECO:0000255" key="3"/>
<evidence type="ECO:0000255" key="4">
    <source>
        <dbReference type="PROSITE-ProRule" id="PRU00160"/>
    </source>
</evidence>
<evidence type="ECO:0000256" key="5">
    <source>
        <dbReference type="SAM" id="MobiDB-lite"/>
    </source>
</evidence>
<evidence type="ECO:0000269" key="6">
    <source>
    </source>
</evidence>
<evidence type="ECO:0000303" key="7">
    <source>
    </source>
</evidence>
<evidence type="ECO:0000305" key="8"/>
<evidence type="ECO:0000312" key="9">
    <source>
        <dbReference type="EMBL" id="AAU43782.1"/>
    </source>
</evidence>
<dbReference type="EC" id="3.1.3.-" evidence="2"/>
<dbReference type="EMBL" id="AY616240">
    <property type="protein sequence ID" value="AAU43782.1"/>
    <property type="molecule type" value="mRNA"/>
</dbReference>
<dbReference type="SMR" id="G4LTX4"/>
<dbReference type="GO" id="GO:0009501">
    <property type="term" value="C:amyloplast"/>
    <property type="evidence" value="ECO:0007669"/>
    <property type="project" value="UniProtKB-SubCell"/>
</dbReference>
<dbReference type="GO" id="GO:0009507">
    <property type="term" value="C:chloroplast"/>
    <property type="evidence" value="ECO:0007669"/>
    <property type="project" value="UniProtKB-ARBA"/>
</dbReference>
<dbReference type="GO" id="GO:0005634">
    <property type="term" value="C:nucleus"/>
    <property type="evidence" value="ECO:0007669"/>
    <property type="project" value="UniProtKB-SubCell"/>
</dbReference>
<dbReference type="GO" id="GO:0019203">
    <property type="term" value="F:carbohydrate phosphatase activity"/>
    <property type="evidence" value="ECO:0007669"/>
    <property type="project" value="InterPro"/>
</dbReference>
<dbReference type="GO" id="GO:0004721">
    <property type="term" value="F:phosphoprotein phosphatase activity"/>
    <property type="evidence" value="ECO:0007669"/>
    <property type="project" value="UniProtKB-KW"/>
</dbReference>
<dbReference type="GO" id="GO:2001070">
    <property type="term" value="F:starch binding"/>
    <property type="evidence" value="ECO:0007669"/>
    <property type="project" value="TreeGrafter"/>
</dbReference>
<dbReference type="GO" id="GO:0005983">
    <property type="term" value="P:starch catabolic process"/>
    <property type="evidence" value="ECO:0007669"/>
    <property type="project" value="TreeGrafter"/>
</dbReference>
<dbReference type="CDD" id="cd14526">
    <property type="entry name" value="DSP_laforin-like"/>
    <property type="match status" value="1"/>
</dbReference>
<dbReference type="CDD" id="cd02859">
    <property type="entry name" value="E_set_AMPKbeta_like_N"/>
    <property type="match status" value="1"/>
</dbReference>
<dbReference type="FunFam" id="2.60.40.10:FF:000992">
    <property type="entry name" value="Phosphoglucan phosphatase DSP4, chloroplastic"/>
    <property type="match status" value="1"/>
</dbReference>
<dbReference type="FunFam" id="3.90.190.10:FF:000069">
    <property type="entry name" value="Phosphoglucan phosphatase DSP4, chloroplastic"/>
    <property type="match status" value="1"/>
</dbReference>
<dbReference type="Gene3D" id="2.60.40.10">
    <property type="entry name" value="Immunoglobulins"/>
    <property type="match status" value="1"/>
</dbReference>
<dbReference type="Gene3D" id="3.90.190.10">
    <property type="entry name" value="Protein tyrosine phosphatase superfamily"/>
    <property type="match status" value="1"/>
</dbReference>
<dbReference type="InterPro" id="IPR032640">
    <property type="entry name" value="AMPK1_CBM"/>
</dbReference>
<dbReference type="InterPro" id="IPR045204">
    <property type="entry name" value="DSP_laforin-like"/>
</dbReference>
<dbReference type="InterPro" id="IPR000340">
    <property type="entry name" value="Dual-sp_phosphatase_cat-dom"/>
</dbReference>
<dbReference type="InterPro" id="IPR013783">
    <property type="entry name" value="Ig-like_fold"/>
</dbReference>
<dbReference type="InterPro" id="IPR014756">
    <property type="entry name" value="Ig_E-set"/>
</dbReference>
<dbReference type="InterPro" id="IPR029021">
    <property type="entry name" value="Prot-tyrosine_phosphatase-like"/>
</dbReference>
<dbReference type="InterPro" id="IPR052832">
    <property type="entry name" value="Starch-Glucan_Phosphatase"/>
</dbReference>
<dbReference type="InterPro" id="IPR000387">
    <property type="entry name" value="Tyr_Pase_dom"/>
</dbReference>
<dbReference type="InterPro" id="IPR020422">
    <property type="entry name" value="TYR_PHOSPHATASE_DUAL_dom"/>
</dbReference>
<dbReference type="PANTHER" id="PTHR46642">
    <property type="entry name" value="DUAL SPECIFICITY PHOSPHATASE, SUBGROUP, CATALYTIC DOMAIN"/>
    <property type="match status" value="1"/>
</dbReference>
<dbReference type="PANTHER" id="PTHR46642:SF3">
    <property type="entry name" value="PHOSPHOGLUCAN PHOSPHATASE DSP4, CHLOROPLASTIC"/>
    <property type="match status" value="1"/>
</dbReference>
<dbReference type="Pfam" id="PF16561">
    <property type="entry name" value="AMPK1_CBM"/>
    <property type="match status" value="1"/>
</dbReference>
<dbReference type="Pfam" id="PF00782">
    <property type="entry name" value="DSPc"/>
    <property type="match status" value="1"/>
</dbReference>
<dbReference type="SMART" id="SM00195">
    <property type="entry name" value="DSPc"/>
    <property type="match status" value="1"/>
</dbReference>
<dbReference type="SUPFAM" id="SSF52799">
    <property type="entry name" value="(Phosphotyrosine protein) phosphatases II"/>
    <property type="match status" value="1"/>
</dbReference>
<dbReference type="SUPFAM" id="SSF81296">
    <property type="entry name" value="E set domains"/>
    <property type="match status" value="1"/>
</dbReference>
<dbReference type="PROSITE" id="PS50056">
    <property type="entry name" value="TYR_PHOSPHATASE_2"/>
    <property type="match status" value="1"/>
</dbReference>
<dbReference type="PROSITE" id="PS50054">
    <property type="entry name" value="TYR_PHOSPHATASE_DUAL"/>
    <property type="match status" value="1"/>
</dbReference>
<feature type="transit peptide" description="Amyloplast" evidence="3">
    <location>
        <begin position="1"/>
        <end position="42"/>
    </location>
</feature>
<feature type="chain" id="PRO_0000426727" description="Phosphoglucan phosphatase DSP4, amyloplastic" evidence="3">
    <location>
        <begin position="43"/>
        <end position="375"/>
    </location>
</feature>
<feature type="domain" description="Tyrosine-protein phosphatase" evidence="4">
    <location>
        <begin position="92"/>
        <end position="249"/>
    </location>
</feature>
<feature type="region of interest" description="Disordered" evidence="5">
    <location>
        <begin position="49"/>
        <end position="71"/>
    </location>
</feature>
<feature type="region of interest" description="Polysaccharide binding" evidence="2">
    <location>
        <begin position="254"/>
        <end position="330"/>
    </location>
</feature>
<feature type="compositionally biased region" description="Polar residues" evidence="5">
    <location>
        <begin position="51"/>
        <end position="61"/>
    </location>
</feature>
<feature type="active site" description="Phosphocysteine intermediate" evidence="4">
    <location>
        <position position="193"/>
    </location>
</feature>
<feature type="binding site" evidence="1">
    <location>
        <begin position="194"/>
        <end position="199"/>
    </location>
    <ligand>
        <name>substrate</name>
    </ligand>
</feature>
<proteinExistence type="evidence at protein level"/>